<accession>P08385</accession>
<gene>
    <name type="primary">16.6</name>
</gene>
<reference key="1">
    <citation type="journal article" date="1986" name="Gene">
        <title>Nucleotide sequence of the right early region of Bacillus subtilis phage PZA completes the 19366-bp sequence of PZA genome. Comparison with the homologous sequence of phage phi 29.</title>
        <authorList>
            <person name="Paces V."/>
            <person name="Vlcek C."/>
            <person name="Urbanek P."/>
            <person name="Hostomsky Z."/>
        </authorList>
    </citation>
    <scope>NUCLEOTIDE SEQUENCE [GENOMIC DNA]</scope>
</reference>
<name>GP166_BPPZA</name>
<sequence>MKMLTHTCFYCSFSFFTRKFDVFGAITKKDTPVVFCPACGNQSLTVSHIEEEIG</sequence>
<organism>
    <name type="scientific">Bacillus phage PZA</name>
    <name type="common">Bacteriophage PZA</name>
    <dbReference type="NCBI Taxonomy" id="10757"/>
    <lineage>
        <taxon>Viruses</taxon>
        <taxon>Duplodnaviria</taxon>
        <taxon>Heunggongvirae</taxon>
        <taxon>Uroviricota</taxon>
        <taxon>Caudoviricetes</taxon>
        <taxon>Salasmaviridae</taxon>
        <taxon>Picovirinae</taxon>
        <taxon>Salasvirus</taxon>
        <taxon>Salasvirus PZA</taxon>
    </lineage>
</organism>
<organismHost>
    <name type="scientific">Bacillus subtilis</name>
    <dbReference type="NCBI Taxonomy" id="1423"/>
</organismHost>
<keyword id="KW-0244">Early protein</keyword>
<feature type="chain" id="PRO_0000106612" description="Gene product 16.6">
    <location>
        <begin position="1"/>
        <end position="54"/>
    </location>
</feature>
<dbReference type="EMBL" id="M11813">
    <property type="protein sequence ID" value="AAA88495.1"/>
    <property type="molecule type" value="Genomic_DNA"/>
</dbReference>
<dbReference type="PIR" id="B29004">
    <property type="entry name" value="WRBP66"/>
</dbReference>
<dbReference type="Proteomes" id="UP000000855">
    <property type="component" value="Segment"/>
</dbReference>
<protein>
    <recommendedName>
        <fullName>Gene product 16.6</fullName>
        <shortName>gp16.6</shortName>
    </recommendedName>
    <alternativeName>
        <fullName>Protein p16.6</fullName>
    </alternativeName>
</protein>
<evidence type="ECO:0000305" key="1"/>
<proteinExistence type="inferred from homology"/>
<comment type="similarity">
    <text evidence="1">Belongs to the phi29likevirus gp16.6 family.</text>
</comment>